<name>METK4_CAEEL</name>
<protein>
    <recommendedName>
        <fullName>Probable S-adenosylmethionine synthase 4</fullName>
        <shortName>AdoMet synthase 4</shortName>
        <ecNumber evidence="3">2.5.1.6</ecNumber>
    </recommendedName>
    <alternativeName>
        <fullName>Methionine adenosyltransferase 4</fullName>
        <shortName>MAT 4</shortName>
    </alternativeName>
</protein>
<comment type="function">
    <text evidence="3">Catalyzes the formation of S-adenosylmethionine from methionine and ATP. The reaction comprises two steps that are both catalyzed by the same enzyme: formation of S-adenosylmethionine (AdoMet) and triphosphate, and subsequent hydrolysis of the triphosphate.</text>
</comment>
<comment type="catalytic activity">
    <reaction evidence="3">
        <text>L-methionine + ATP + H2O = S-adenosyl-L-methionine + phosphate + diphosphate</text>
        <dbReference type="Rhea" id="RHEA:21080"/>
        <dbReference type="ChEBI" id="CHEBI:15377"/>
        <dbReference type="ChEBI" id="CHEBI:30616"/>
        <dbReference type="ChEBI" id="CHEBI:33019"/>
        <dbReference type="ChEBI" id="CHEBI:43474"/>
        <dbReference type="ChEBI" id="CHEBI:57844"/>
        <dbReference type="ChEBI" id="CHEBI:59789"/>
        <dbReference type="EC" id="2.5.1.6"/>
    </reaction>
</comment>
<comment type="cofactor">
    <cofactor evidence="2">
        <name>Mg(2+)</name>
        <dbReference type="ChEBI" id="CHEBI:18420"/>
    </cofactor>
    <text evidence="2">Binds 2 magnesium ions per subunit. The magnesium ions interact primarily with the substrate.</text>
</comment>
<comment type="cofactor">
    <cofactor evidence="2">
        <name>K(+)</name>
        <dbReference type="ChEBI" id="CHEBI:29103"/>
    </cofactor>
    <text evidence="2">Binds 1 potassium ion per subunit. The potassium ion interacts primarily with the substrate.</text>
</comment>
<comment type="pathway">
    <text evidence="3">Amino-acid biosynthesis; S-adenosyl-L-methionine biosynthesis; S-adenosyl-L-methionine from L-methionine: step 1/1.</text>
</comment>
<comment type="interaction">
    <interactant intactId="EBI-2412759">
        <id>P50306</id>
    </interactant>
    <interactant intactId="EBI-2412749">
        <id>O17680</id>
        <label>sams-1</label>
    </interactant>
    <organismsDiffer>false</organismsDiffer>
    <experiments>4</experiments>
</comment>
<comment type="miscellaneous">
    <text evidence="5">Protein expression is regulated by post-transcriptional regulation: under rich-diet conditions, mett-10 binds and methylates sams-4 mRNA, directly inhibiting splicing and protein production of S-adenosylmethionine synthase.</text>
</comment>
<comment type="similarity">
    <text evidence="4">Belongs to the AdoMet synthase family.</text>
</comment>
<keyword id="KW-0067">ATP-binding</keyword>
<keyword id="KW-0460">Magnesium</keyword>
<keyword id="KW-0479">Metal-binding</keyword>
<keyword id="KW-0547">Nucleotide-binding</keyword>
<keyword id="KW-0554">One-carbon metabolism</keyword>
<keyword id="KW-0630">Potassium</keyword>
<keyword id="KW-1185">Reference proteome</keyword>
<keyword id="KW-0808">Transferase</keyword>
<accession>P50306</accession>
<proteinExistence type="evidence at protein level"/>
<evidence type="ECO:0000250" key="1">
    <source>
        <dbReference type="UniProtKB" id="P0A817"/>
    </source>
</evidence>
<evidence type="ECO:0000250" key="2">
    <source>
        <dbReference type="UniProtKB" id="P13444"/>
    </source>
</evidence>
<evidence type="ECO:0000250" key="3">
    <source>
        <dbReference type="UniProtKB" id="Q00266"/>
    </source>
</evidence>
<evidence type="ECO:0000305" key="4"/>
<evidence type="ECO:0000305" key="5">
    <source>
    </source>
</evidence>
<sequence length="404" mass="43960">MPQHKFLFTSESVSEGHPDKMCDQISDAVLDAHLAQDPHAKVACETVTKTGMIMLCGEITSKAVVDYQVLVRNVIKKIGYDDSSKGFDYKTCNVLVALEQQSPEIAAGVHVDKDSDDVGAGDQGIMFGYATDETEEAMPLTLLLSHKLNRKLHELRRSGELEWVRPDSKTQVTIEYASEGGACVPLRVHTVVISTQHSPDISLDDLRKELIEKVIKAVIPANLIDDKTIYHLNPCGSFIIGGPMGDAGLTGRKIIVDTYGGWGAHGGGAFSGKDPTKVDRSAAYAARWVAKSLVKAGLCRRCLVQVSYAIGVAKPLSVMVFSFGTSALSEEDLLTIVNDNFDLRPGKIIKNLDLKRPIYEPTAENGHFGHNNFPWEQPRNLKISADMLAKSQGPAQPDVIGIAH</sequence>
<dbReference type="EC" id="2.5.1.6" evidence="3"/>
<dbReference type="EMBL" id="FO080387">
    <property type="protein sequence ID" value="CCD63371.1"/>
    <property type="molecule type" value="Genomic_DNA"/>
</dbReference>
<dbReference type="PIR" id="T34084">
    <property type="entry name" value="T34084"/>
</dbReference>
<dbReference type="RefSeq" id="NP_500871.1">
    <property type="nucleotide sequence ID" value="NM_068470.6"/>
</dbReference>
<dbReference type="SMR" id="P50306"/>
<dbReference type="BioGRID" id="42476">
    <property type="interactions" value="7"/>
</dbReference>
<dbReference type="FunCoup" id="P50306">
    <property type="interactions" value="2019"/>
</dbReference>
<dbReference type="IntAct" id="P50306">
    <property type="interactions" value="1"/>
</dbReference>
<dbReference type="STRING" id="6239.C06E7.3a.2"/>
<dbReference type="PaxDb" id="6239-C06E7.3a"/>
<dbReference type="PeptideAtlas" id="P50306"/>
<dbReference type="EnsemblMetazoa" id="C06E7.3a.1">
    <property type="protein sequence ID" value="C06E7.3a.1"/>
    <property type="gene ID" value="WBGene00015540"/>
</dbReference>
<dbReference type="GeneID" id="177354"/>
<dbReference type="KEGG" id="cel:CELE_C06E7.3"/>
<dbReference type="UCSC" id="C06E7.3b.1">
    <property type="organism name" value="c. elegans"/>
</dbReference>
<dbReference type="AGR" id="WB:WBGene00015540"/>
<dbReference type="CTD" id="177354"/>
<dbReference type="WormBase" id="C06E7.3a">
    <property type="protein sequence ID" value="CE03959"/>
    <property type="gene ID" value="WBGene00015540"/>
    <property type="gene designation" value="sams-4"/>
</dbReference>
<dbReference type="eggNOG" id="KOG1506">
    <property type="taxonomic scope" value="Eukaryota"/>
</dbReference>
<dbReference type="GeneTree" id="ENSGT00950000183185"/>
<dbReference type="HOGENOM" id="CLU_041802_1_1_1"/>
<dbReference type="InParanoid" id="P50306"/>
<dbReference type="OMA" id="TVEYRMS"/>
<dbReference type="OrthoDB" id="5852090at2759"/>
<dbReference type="PhylomeDB" id="P50306"/>
<dbReference type="UniPathway" id="UPA00315">
    <property type="reaction ID" value="UER00080"/>
</dbReference>
<dbReference type="PRO" id="PR:P50306"/>
<dbReference type="Proteomes" id="UP000001940">
    <property type="component" value="Chromosome IV"/>
</dbReference>
<dbReference type="Bgee" id="WBGene00015540">
    <property type="expression patterns" value="Expressed in adult organism and 4 other cell types or tissues"/>
</dbReference>
<dbReference type="GO" id="GO:0005829">
    <property type="term" value="C:cytosol"/>
    <property type="evidence" value="ECO:0000318"/>
    <property type="project" value="GO_Central"/>
</dbReference>
<dbReference type="GO" id="GO:0005524">
    <property type="term" value="F:ATP binding"/>
    <property type="evidence" value="ECO:0007669"/>
    <property type="project" value="UniProtKB-KW"/>
</dbReference>
<dbReference type="GO" id="GO:0046872">
    <property type="term" value="F:metal ion binding"/>
    <property type="evidence" value="ECO:0007669"/>
    <property type="project" value="UniProtKB-KW"/>
</dbReference>
<dbReference type="GO" id="GO:0004478">
    <property type="term" value="F:methionine adenosyltransferase activity"/>
    <property type="evidence" value="ECO:0000318"/>
    <property type="project" value="GO_Central"/>
</dbReference>
<dbReference type="GO" id="GO:0006730">
    <property type="term" value="P:one-carbon metabolic process"/>
    <property type="evidence" value="ECO:0007669"/>
    <property type="project" value="UniProtKB-KW"/>
</dbReference>
<dbReference type="GO" id="GO:0006556">
    <property type="term" value="P:S-adenosylmethionine biosynthetic process"/>
    <property type="evidence" value="ECO:0000318"/>
    <property type="project" value="GO_Central"/>
</dbReference>
<dbReference type="CDD" id="cd18079">
    <property type="entry name" value="S-AdoMet_synt"/>
    <property type="match status" value="1"/>
</dbReference>
<dbReference type="FunFam" id="3.30.300.10:FF:000001">
    <property type="entry name" value="S-adenosylmethionine synthase"/>
    <property type="match status" value="1"/>
</dbReference>
<dbReference type="FunFam" id="3.30.300.10:FF:000003">
    <property type="entry name" value="S-adenosylmethionine synthase"/>
    <property type="match status" value="1"/>
</dbReference>
<dbReference type="FunFam" id="3.30.300.10:FF:000004">
    <property type="entry name" value="S-adenosylmethionine synthase"/>
    <property type="match status" value="1"/>
</dbReference>
<dbReference type="Gene3D" id="3.30.300.10">
    <property type="match status" value="3"/>
</dbReference>
<dbReference type="HAMAP" id="MF_00086">
    <property type="entry name" value="S_AdoMet_synth1"/>
    <property type="match status" value="1"/>
</dbReference>
<dbReference type="InterPro" id="IPR022631">
    <property type="entry name" value="ADOMET_SYNTHASE_CS"/>
</dbReference>
<dbReference type="InterPro" id="IPR022630">
    <property type="entry name" value="S-AdoMet_synt_C"/>
</dbReference>
<dbReference type="InterPro" id="IPR022629">
    <property type="entry name" value="S-AdoMet_synt_central"/>
</dbReference>
<dbReference type="InterPro" id="IPR022628">
    <property type="entry name" value="S-AdoMet_synt_N"/>
</dbReference>
<dbReference type="InterPro" id="IPR002133">
    <property type="entry name" value="S-AdoMet_synthetase"/>
</dbReference>
<dbReference type="InterPro" id="IPR022636">
    <property type="entry name" value="S-AdoMet_synthetase_sfam"/>
</dbReference>
<dbReference type="NCBIfam" id="TIGR01034">
    <property type="entry name" value="metK"/>
    <property type="match status" value="1"/>
</dbReference>
<dbReference type="PANTHER" id="PTHR11964">
    <property type="entry name" value="S-ADENOSYLMETHIONINE SYNTHETASE"/>
    <property type="match status" value="1"/>
</dbReference>
<dbReference type="Pfam" id="PF02773">
    <property type="entry name" value="S-AdoMet_synt_C"/>
    <property type="match status" value="1"/>
</dbReference>
<dbReference type="Pfam" id="PF02772">
    <property type="entry name" value="S-AdoMet_synt_M"/>
    <property type="match status" value="1"/>
</dbReference>
<dbReference type="Pfam" id="PF00438">
    <property type="entry name" value="S-AdoMet_synt_N"/>
    <property type="match status" value="1"/>
</dbReference>
<dbReference type="PIRSF" id="PIRSF000497">
    <property type="entry name" value="MAT"/>
    <property type="match status" value="1"/>
</dbReference>
<dbReference type="SUPFAM" id="SSF55973">
    <property type="entry name" value="S-adenosylmethionine synthetase"/>
    <property type="match status" value="3"/>
</dbReference>
<dbReference type="PROSITE" id="PS00376">
    <property type="entry name" value="ADOMET_SYNTHASE_1"/>
    <property type="match status" value="1"/>
</dbReference>
<dbReference type="PROSITE" id="PS00377">
    <property type="entry name" value="ADOMET_SYNTHASE_2"/>
    <property type="match status" value="1"/>
</dbReference>
<feature type="chain" id="PRO_0000174443" description="Probable S-adenosylmethionine synthase 4">
    <location>
        <begin position="1"/>
        <end position="404"/>
    </location>
</feature>
<feature type="binding site" evidence="2">
    <location>
        <position position="11"/>
    </location>
    <ligand>
        <name>Mg(2+)</name>
        <dbReference type="ChEBI" id="CHEBI:18420"/>
    </ligand>
</feature>
<feature type="binding site" description="in other chain" evidence="3">
    <location>
        <position position="17"/>
    </location>
    <ligand>
        <name>ATP</name>
        <dbReference type="ChEBI" id="CHEBI:30616"/>
        <note>ligand shared between two neighboring subunits</note>
    </ligand>
</feature>
<feature type="binding site" evidence="1">
    <location>
        <position position="45"/>
    </location>
    <ligand>
        <name>K(+)</name>
        <dbReference type="ChEBI" id="CHEBI:29103"/>
    </ligand>
</feature>
<feature type="binding site" description="in other chain" evidence="1">
    <location>
        <position position="58"/>
    </location>
    <ligand>
        <name>L-methionine</name>
        <dbReference type="ChEBI" id="CHEBI:57844"/>
        <note>ligand shared between two neighboring subunits</note>
    </ligand>
</feature>
<feature type="binding site" description="in other chain" evidence="1">
    <location>
        <position position="101"/>
    </location>
    <ligand>
        <name>L-methionine</name>
        <dbReference type="ChEBI" id="CHEBI:57844"/>
        <note>ligand shared between two neighboring subunits</note>
    </ligand>
</feature>
<feature type="binding site" description="in other chain" evidence="3">
    <location>
        <begin position="167"/>
        <end position="169"/>
    </location>
    <ligand>
        <name>ATP</name>
        <dbReference type="ChEBI" id="CHEBI:30616"/>
        <note>ligand shared between two neighboring subunits</note>
    </ligand>
</feature>
<feature type="binding site" description="in other chain" evidence="3">
    <location>
        <begin position="235"/>
        <end position="238"/>
    </location>
    <ligand>
        <name>ATP</name>
        <dbReference type="ChEBI" id="CHEBI:30616"/>
        <note>ligand shared between two neighboring subunits</note>
    </ligand>
</feature>
<feature type="binding site" description="in other chain" evidence="3">
    <location>
        <position position="246"/>
    </location>
    <ligand>
        <name>ATP</name>
        <dbReference type="ChEBI" id="CHEBI:30616"/>
        <note>ligand shared between two neighboring subunits</note>
    </ligand>
</feature>
<feature type="binding site" evidence="1">
    <location>
        <position position="246"/>
    </location>
    <ligand>
        <name>L-methionine</name>
        <dbReference type="ChEBI" id="CHEBI:57844"/>
        <note>ligand shared between two neighboring subunits</note>
    </ligand>
</feature>
<feature type="binding site" description="in other chain" evidence="1">
    <location>
        <begin position="252"/>
        <end position="253"/>
    </location>
    <ligand>
        <name>ATP</name>
        <dbReference type="ChEBI" id="CHEBI:30616"/>
        <note>ligand shared between two neighboring subunits</note>
    </ligand>
</feature>
<feature type="binding site" evidence="1">
    <location>
        <position position="269"/>
    </location>
    <ligand>
        <name>ATP</name>
        <dbReference type="ChEBI" id="CHEBI:30616"/>
        <note>ligand shared between two neighboring subunits</note>
    </ligand>
</feature>
<feature type="binding site" evidence="1">
    <location>
        <position position="273"/>
    </location>
    <ligand>
        <name>ATP</name>
        <dbReference type="ChEBI" id="CHEBI:30616"/>
        <note>ligand shared between two neighboring subunits</note>
    </ligand>
</feature>
<feature type="binding site" evidence="2">
    <location>
        <position position="277"/>
    </location>
    <ligand>
        <name>ATP</name>
        <dbReference type="ChEBI" id="CHEBI:30616"/>
        <note>ligand shared between two neighboring subunits</note>
    </ligand>
</feature>
<feature type="binding site" description="in other chain" evidence="1">
    <location>
        <position position="277"/>
    </location>
    <ligand>
        <name>L-methionine</name>
        <dbReference type="ChEBI" id="CHEBI:57844"/>
        <note>ligand shared between two neighboring subunits</note>
    </ligand>
</feature>
<gene>
    <name type="primary">sams-4</name>
    <name type="ORF">C06E7.3</name>
</gene>
<organism>
    <name type="scientific">Caenorhabditis elegans</name>
    <dbReference type="NCBI Taxonomy" id="6239"/>
    <lineage>
        <taxon>Eukaryota</taxon>
        <taxon>Metazoa</taxon>
        <taxon>Ecdysozoa</taxon>
        <taxon>Nematoda</taxon>
        <taxon>Chromadorea</taxon>
        <taxon>Rhabditida</taxon>
        <taxon>Rhabditina</taxon>
        <taxon>Rhabditomorpha</taxon>
        <taxon>Rhabditoidea</taxon>
        <taxon>Rhabditidae</taxon>
        <taxon>Peloderinae</taxon>
        <taxon>Caenorhabditis</taxon>
    </lineage>
</organism>
<reference key="1">
    <citation type="journal article" date="1998" name="Science">
        <title>Genome sequence of the nematode C. elegans: a platform for investigating biology.</title>
        <authorList>
            <consortium name="The C. elegans sequencing consortium"/>
        </authorList>
    </citation>
    <scope>NUCLEOTIDE SEQUENCE [LARGE SCALE GENOMIC DNA]</scope>
    <source>
        <strain>Bristol N2</strain>
    </source>
</reference>
<reference key="2">
    <citation type="journal article" date="2021" name="Cell">
        <title>Splice site m6A methylation prevents binding of U2AF35 to inhibit RNA splicing.</title>
        <authorList>
            <person name="Mendel M."/>
            <person name="Delaney K."/>
            <person name="Pandey R.R."/>
            <person name="Chen K.M."/>
            <person name="Wenda J.M."/>
            <person name="Vaagboe C.B."/>
            <person name="Steiner F.A."/>
            <person name="Homolka D."/>
            <person name="Pillai R.S."/>
        </authorList>
    </citation>
    <scope>POST-TRANSCRIPTIONAL REGULATION</scope>
</reference>